<reference key="1">
    <citation type="journal article" date="1996" name="Science">
        <title>Complete genome sequence of the methanogenic archaeon, Methanococcus jannaschii.</title>
        <authorList>
            <person name="Bult C.J."/>
            <person name="White O."/>
            <person name="Olsen G.J."/>
            <person name="Zhou L."/>
            <person name="Fleischmann R.D."/>
            <person name="Sutton G.G."/>
            <person name="Blake J.A."/>
            <person name="FitzGerald L.M."/>
            <person name="Clayton R.A."/>
            <person name="Gocayne J.D."/>
            <person name="Kerlavage A.R."/>
            <person name="Dougherty B.A."/>
            <person name="Tomb J.-F."/>
            <person name="Adams M.D."/>
            <person name="Reich C.I."/>
            <person name="Overbeek R."/>
            <person name="Kirkness E.F."/>
            <person name="Weinstock K.G."/>
            <person name="Merrick J.M."/>
            <person name="Glodek A."/>
            <person name="Scott J.L."/>
            <person name="Geoghagen N.S.M."/>
            <person name="Weidman J.F."/>
            <person name="Fuhrmann J.L."/>
            <person name="Nguyen D."/>
            <person name="Utterback T.R."/>
            <person name="Kelley J.M."/>
            <person name="Peterson J.D."/>
            <person name="Sadow P.W."/>
            <person name="Hanna M.C."/>
            <person name="Cotton M.D."/>
            <person name="Roberts K.M."/>
            <person name="Hurst M.A."/>
            <person name="Kaine B.P."/>
            <person name="Borodovsky M."/>
            <person name="Klenk H.-P."/>
            <person name="Fraser C.M."/>
            <person name="Smith H.O."/>
            <person name="Woese C.R."/>
            <person name="Venter J.C."/>
        </authorList>
    </citation>
    <scope>NUCLEOTIDE SEQUENCE [LARGE SCALE GENOMIC DNA]</scope>
    <source>
        <strain>ATCC 43067 / DSM 2661 / JAL-1 / JCM 10045 / NBRC 100440</strain>
    </source>
</reference>
<keyword id="KW-1185">Reference proteome</keyword>
<organism>
    <name type="scientific">Methanocaldococcus jannaschii (strain ATCC 43067 / DSM 2661 / JAL-1 / JCM 10045 / NBRC 100440)</name>
    <name type="common">Methanococcus jannaschii</name>
    <dbReference type="NCBI Taxonomy" id="243232"/>
    <lineage>
        <taxon>Archaea</taxon>
        <taxon>Methanobacteriati</taxon>
        <taxon>Methanobacteriota</taxon>
        <taxon>Methanomada group</taxon>
        <taxon>Methanococci</taxon>
        <taxon>Methanococcales</taxon>
        <taxon>Methanocaldococcaceae</taxon>
        <taxon>Methanocaldococcus</taxon>
    </lineage>
</organism>
<name>Y115_METJA</name>
<feature type="chain" id="PRO_0000106699" description="Uncharacterized protein MJ0115">
    <location>
        <begin position="1"/>
        <end position="155"/>
    </location>
</feature>
<gene>
    <name type="ordered locus">MJ0115</name>
</gene>
<dbReference type="EMBL" id="L77117">
    <property type="protein sequence ID" value="AAB98096.1"/>
    <property type="molecule type" value="Genomic_DNA"/>
</dbReference>
<dbReference type="PIR" id="C64314">
    <property type="entry name" value="C64314"/>
</dbReference>
<dbReference type="RefSeq" id="WP_010869607.1">
    <property type="nucleotide sequence ID" value="NC_000909.1"/>
</dbReference>
<dbReference type="SMR" id="Q57579"/>
<dbReference type="FunCoup" id="Q57579">
    <property type="interactions" value="4"/>
</dbReference>
<dbReference type="STRING" id="243232.MJ_0115"/>
<dbReference type="PaxDb" id="243232-MJ_0115"/>
<dbReference type="EnsemblBacteria" id="AAB98096">
    <property type="protein sequence ID" value="AAB98096"/>
    <property type="gene ID" value="MJ_0115"/>
</dbReference>
<dbReference type="GeneID" id="1450957"/>
<dbReference type="KEGG" id="mja:MJ_0115"/>
<dbReference type="eggNOG" id="arCOG04853">
    <property type="taxonomic scope" value="Archaea"/>
</dbReference>
<dbReference type="HOGENOM" id="CLU_1727260_0_0_2"/>
<dbReference type="InParanoid" id="Q57579"/>
<dbReference type="OrthoDB" id="145053at2157"/>
<dbReference type="PhylomeDB" id="Q57579"/>
<dbReference type="Proteomes" id="UP000000805">
    <property type="component" value="Chromosome"/>
</dbReference>
<dbReference type="InterPro" id="IPR017671">
    <property type="entry name" value="Methan_mark_9"/>
</dbReference>
<dbReference type="NCBIfam" id="TIGR03277">
    <property type="entry name" value="methan_mark_9"/>
    <property type="match status" value="1"/>
</dbReference>
<protein>
    <recommendedName>
        <fullName>Uncharacterized protein MJ0115</fullName>
    </recommendedName>
</protein>
<accession>Q57579</accession>
<sequence>MGWENAPSHICRGGDLRGLAFCCPPIKYCPIHKALAVLKMSPEEFIRIKEEFGKRTKLGLGENTCFGSLVWCCKITKPCPYRDYELAKNNISPDEYMELKKQLAEEIIRNSQFFKEAVEVFVKKGIPKDIAEKCILETGDLKKAYEMAIKMIDKD</sequence>
<proteinExistence type="predicted"/>